<comment type="function">
    <text>Core component of nucleosome. Nucleosomes wrap and compact DNA into chromatin, limiting DNA accessibility to the cellular machineries which require DNA as a template. Histones thereby play a central role in transcription regulation, DNA repair, DNA replication and chromosomal stability. DNA accessibility is regulated via a complex set of post-translational modifications of histones, also called histone code, and nucleosome remodeling.</text>
</comment>
<comment type="subunit">
    <text evidence="8">The nucleosome is a histone octamer containing two molecules each of H2A, H2B, H3 and H4 assembled in one H3-H4 heterotetramer and two H2A-H2B heterodimers. The octamer wraps approximately 147 bp of DNA. Interacts with TONSL; CHAF1A and CHAF1B (PubMed:33857403).</text>
</comment>
<comment type="interaction">
    <interactant intactId="EBI-358900">
        <id>Q16695</id>
    </interactant>
    <interactant intactId="EBI-624291">
        <id>Q96GD4</id>
        <label>AURKB</label>
    </interactant>
    <organismsDiffer>false</organismsDiffer>
    <experiments>8</experiments>
</comment>
<comment type="interaction">
    <interactant intactId="EBI-358900">
        <id>Q16695</id>
    </interactant>
    <interactant intactId="EBI-78219">
        <id>P45973</id>
        <label>CBX5</label>
    </interactant>
    <organismsDiffer>false</organismsDiffer>
    <experiments>2</experiments>
</comment>
<comment type="interaction">
    <interactant intactId="EBI-358900">
        <id>Q16695</id>
    </interactant>
    <interactant intactId="EBI-358971">
        <id>P04908</id>
        <label>H2AC8</label>
    </interactant>
    <organismsDiffer>false</organismsDiffer>
    <experiments>2</experiments>
</comment>
<comment type="interaction">
    <interactant intactId="EBI-358900">
        <id>Q16695</id>
    </interactant>
    <interactant intactId="EBI-494830">
        <id>P16104</id>
        <label>H2AX</label>
    </interactant>
    <organismsDiffer>false</organismsDiffer>
    <experiments>12</experiments>
</comment>
<comment type="interaction">
    <interactant intactId="EBI-358900">
        <id>Q16695</id>
    </interactant>
    <interactant intactId="EBI-750650">
        <id>Q71DI3</id>
        <label>H3C15</label>
    </interactant>
    <organismsDiffer>false</organismsDiffer>
    <experiments>2</experiments>
</comment>
<comment type="interaction">
    <interactant intactId="EBI-358900">
        <id>Q16695</id>
    </interactant>
    <interactant intactId="EBI-302023">
        <id>P62805</id>
        <label>H4C9</label>
    </interactant>
    <organismsDiffer>false</organismsDiffer>
    <experiments>3</experiments>
</comment>
<comment type="interaction">
    <interactant intactId="EBI-358900">
        <id>Q16695</id>
    </interactant>
    <interactant intactId="EBI-710124">
        <id>O60341</id>
        <label>KDM1A</label>
    </interactant>
    <organismsDiffer>false</organismsDiffer>
    <experiments>2</experiments>
</comment>
<comment type="interaction">
    <interactant intactId="EBI-358900">
        <id>Q16695</id>
    </interactant>
    <interactant intactId="EBI-936709">
        <id>O75164</id>
        <label>KDM4A</label>
    </interactant>
    <organismsDiffer>false</organismsDiffer>
    <experiments>6</experiments>
</comment>
<comment type="interaction">
    <interactant intactId="EBI-358900">
        <id>Q16695</id>
    </interactant>
    <interactant intactId="EBI-7038920">
        <id>P49321-2</id>
        <label>NASP</label>
    </interactant>
    <organismsDiffer>false</organismsDiffer>
    <experiments>6</experiments>
</comment>
<comment type="interaction">
    <interactant intactId="EBI-358900">
        <id>Q16695</id>
    </interactant>
    <interactant intactId="EBI-10226430">
        <id>Q0D2K3</id>
        <label>RIPPLY1</label>
    </interactant>
    <organismsDiffer>false</organismsDiffer>
    <experiments>3</experiments>
</comment>
<comment type="interaction">
    <interactant intactId="EBI-358900">
        <id>Q16695</id>
    </interactant>
    <interactant intactId="EBI-747398">
        <id>Q9UHJ3</id>
        <label>SFMBT1</label>
    </interactant>
    <organismsDiffer>false</organismsDiffer>
    <experiments>4</experiments>
</comment>
<comment type="subcellular location">
    <subcellularLocation>
        <location>Nucleus</location>
    </subcellularLocation>
    <subcellularLocation>
        <location>Chromosome</location>
    </subcellularLocation>
</comment>
<comment type="tissue specificity">
    <text>Expressed in testicular cells.</text>
</comment>
<comment type="developmental stage">
    <text>Expressed during S phase, then expression strongly decreases as cell division slows down during the process of differentiation.</text>
</comment>
<comment type="PTM">
    <text evidence="4">Acetylation is generally linked to gene activation. Acetylation on Lys-10 (H3K9ac) impairs methylation at Arg-9 (H3R8me2s). Acetylation on Lys-19 (H3K18ac) and Lys-24 (H3K24ac) favors methylation at Arg-18 (H3R17me). Acetylation at Lys-123 (H3K122ac) by EP300/p300 plays a central role in chromatin structure: localizes at the surface of the histone octamer and stimulates transcription, possibly by promoting nucleosome instability (By similarity).</text>
</comment>
<comment type="PTM">
    <text evidence="4">Citrullination at Arg-9 (H3R8ci) and/or Arg-18 (H3R17ci) by PADI4 impairs methylation and represses transcription.</text>
</comment>
<comment type="PTM">
    <text evidence="4">Asymmetric dimethylation at Arg-18 (H3R17me2a) by CARM1 is linked to gene activation. Symmetric dimethylation at Arg-9 (H3R8me2s) by PRMT5 is linked to gene repression. Asymmetric dimethylation at Arg-3 (H3R2me2a) by PRMT6 is linked to gene repression and is mutually exclusive with H3 Lys-5 methylation (H3K4me2 and H3K4me3). H3R2me2a is present at the 3' of genes regardless of their transcription state and is enriched on inactive promoters, while it is absent on active promoters (By similarity).</text>
</comment>
<comment type="PTM">
    <text evidence="4">Methylation at Lys-5 (H3K4me), Lys-37 (H3K36me) and Lys-80 (H3K79me) are linked to gene activation. Methylation at Lys-5 (H3K4me) facilitates subsequent acetylation of H3 and H4. Methylation at Lys-80 (H3K79me) is associated with DNA double-strand break (DSB) responses and is a specific target for TP53BP1. Methylation at Lys-10 (H3K9me) and Lys-28 (H3K27me) are linked to gene repression. Methylation at Lys-10 (H3K9me) is a specific target for HP1 proteins (CBX1, CBX3 and CBX5) and prevents subsequent phosphorylation at Ser-11 (H3S10ph) and acetylation of H3 and H4. Methylation at Lys-5 (H3K4me) and Lys-80 (H3K79me) require preliminary monoubiquitination of H2B at 'Lys-120'. Methylation at Lys-10 (H3K9me) and Lys-28 (H3K27me) are enriched in inactive X chromosome chromatin. Monomethylation at Lys-57 (H3K56me1) by EHMT2/G9A in G1 phase promotes interaction with PCNA and is required for DNA replication (By similarity).</text>
</comment>
<comment type="PTM">
    <text evidence="4">Phosphorylated at Thr-4 (H3T3ph) by HASPIN during prophase and dephosphorylated during anaphase. Phosphorylation at Ser-11 (H3S10ph) by AURKB is crucial for chromosome condensation and cell-cycle progression during mitosis and meiosis. In addition phosphorylation at Ser-11 (H3S10ph) by RPS6KA4 and RPS6KA5 is important during interphase because it enables the transcription of genes following external stimulation, like mitogens, stress, growth factors or UV irradiation and result in the activation of genes, such as c-fos and c-jun. Phosphorylation at Ser-11 (H3S10ph), which is linked to gene activation, prevents methylation at Lys-10 (H3K9me) but facilitates acetylation of H3 and H4. Phosphorylation at Ser-11 (H3S10ph) by AURKB mediates the dissociation of HP1 proteins (CBX1, CBX3 and CBX5) from heterochromatin. Phosphorylation at Ser-11 (H3S10ph) is also an essential regulatory mechanism for neoplastic cell transformation. Phosphorylated at Ser-29 (H3S28ph) by MAP3K20 isoform 1, RPS6KA5 or AURKB during mitosis or upon ultraviolet B irradiation. Phosphorylation at Thr-7 (H3T6ph) by PRKCB is a specific tag for epigenetic transcriptional activation that prevents demethylation of Lys-5 (H3K4me) by LSD1/KDM1A. At centromeres, specifically phosphorylated at Thr-12 (H3T11ph) from prophase to early anaphase, by DAPK3 and PKN1. Phosphorylation at Thr-12 (H3T11ph) by PKN1 or isoform M2 of PKM (PKM2) is a specific tag for epigenetic transcriptional activation that promotes demethylation of Lys-10 (H3K9me) by KDM4C/JMJD2C. Phosphorylation at Tyr-42 (H3Y41ph) by JAK2 promotes exclusion of CBX5 (HP1 alpha) from chromatin (By similarity).</text>
</comment>
<comment type="PTM">
    <text evidence="4">Ubiquitinated.</text>
</comment>
<comment type="PTM">
    <text evidence="4">Lysine deamination at Lys-5 (H3K4all) to form allysine is mediated by LOXL2. Allysine formation by LOXL2 only takes place on H3K4me3 and results in gene repression (By similarity).</text>
</comment>
<comment type="PTM">
    <text evidence="3">Butyrylation of histones marks active promoters and competes with histone acetylation. It is present during late spermatogenesis.</text>
</comment>
<comment type="PTM">
    <text evidence="1">Succinylation at Lys-80 (H3K79succ) by KAT2A takes place with a maximum frequency around the transcription start sites of genes. It gives a specific tag for epigenetic transcription activation. Desuccinylation at Lys-123 (H3K122succ) by SIRT7 in response to DNA damage promotes chromatin condensation and double-strand breaks (DSBs) repair.</text>
</comment>
<comment type="PTM">
    <text evidence="1">Serine ADP-ribosylation constitutes the primary form of ADP-ribosylation of proteins in response to DNA damage. Serine ADP-ribosylation at Ser-11 (H3S10ADPr) is mutually exclusive with phosphorylation at Ser-11 (H3S10ph) and impairs acetylation at Lys-10 (H3K9ac).</text>
</comment>
<comment type="similarity">
    <text evidence="9">Belongs to the histone H3 family.</text>
</comment>
<organism>
    <name type="scientific">Homo sapiens</name>
    <name type="common">Human</name>
    <dbReference type="NCBI Taxonomy" id="9606"/>
    <lineage>
        <taxon>Eukaryota</taxon>
        <taxon>Metazoa</taxon>
        <taxon>Chordata</taxon>
        <taxon>Craniata</taxon>
        <taxon>Vertebrata</taxon>
        <taxon>Euteleostomi</taxon>
        <taxon>Mammalia</taxon>
        <taxon>Eutheria</taxon>
        <taxon>Euarchontoglires</taxon>
        <taxon>Primates</taxon>
        <taxon>Haplorrhini</taxon>
        <taxon>Catarrhini</taxon>
        <taxon>Hominidae</taxon>
        <taxon>Homo</taxon>
    </lineage>
</organism>
<feature type="initiator methionine" description="Removed" evidence="9">
    <location>
        <position position="1"/>
    </location>
</feature>
<feature type="chain" id="PRO_0000221248" description="Histone H3.1t">
    <location>
        <begin position="2"/>
        <end position="136"/>
    </location>
</feature>
<feature type="region of interest" description="Disordered" evidence="6">
    <location>
        <begin position="1"/>
        <end position="43"/>
    </location>
</feature>
<feature type="modified residue" description="Asymmetric dimethylarginine; by PRMT6; alternate" evidence="1">
    <location>
        <position position="3"/>
    </location>
</feature>
<feature type="modified residue" description="Citrulline; alternate" evidence="4">
    <location>
        <position position="3"/>
    </location>
</feature>
<feature type="modified residue" description="Phosphothreonine; by HASPIN" evidence="1">
    <location>
        <position position="4"/>
    </location>
</feature>
<feature type="modified residue" description="Allysine; alternate" evidence="4">
    <location>
        <position position="5"/>
    </location>
</feature>
<feature type="modified residue" description="N6,N6,N6-trimethyllysine; alternate" evidence="1">
    <location>
        <position position="5"/>
    </location>
</feature>
<feature type="modified residue" description="N6,N6-dimethyllysine; alternate" evidence="1">
    <location>
        <position position="5"/>
    </location>
</feature>
<feature type="modified residue" description="N6-(2-hydroxyisobutyryl)lysine; alternate" evidence="1">
    <location>
        <position position="5"/>
    </location>
</feature>
<feature type="modified residue" description="N6-(beta-hydroxybutyryl)lysine; alternate" evidence="3">
    <location>
        <position position="5"/>
    </location>
</feature>
<feature type="modified residue" description="N6-acetyllysine; alternate" evidence="1">
    <location>
        <position position="5"/>
    </location>
</feature>
<feature type="modified residue" description="N6-methyllysine; alternate" evidence="1">
    <location>
        <position position="5"/>
    </location>
</feature>
<feature type="modified residue" description="5-glutamyl dopamine; alternate" evidence="1">
    <location>
        <position position="6"/>
    </location>
</feature>
<feature type="modified residue" description="5-glutamyl serotonin; alternate" evidence="1">
    <location>
        <position position="6"/>
    </location>
</feature>
<feature type="modified residue" description="Phosphothreonine; by PKC" evidence="1">
    <location>
        <position position="7"/>
    </location>
</feature>
<feature type="modified residue" description="Citrulline; alternate" evidence="4">
    <location>
        <position position="9"/>
    </location>
</feature>
<feature type="modified residue" description="Symmetric dimethylarginine; by PRMT5; alternate" evidence="3">
    <location>
        <position position="9"/>
    </location>
</feature>
<feature type="modified residue" description="N6,N6,N6-trimethyllysine; alternate" evidence="2">
    <location>
        <position position="10"/>
    </location>
</feature>
<feature type="modified residue" description="N6,N6-dimethyllysine; alternate" evidence="2">
    <location>
        <position position="10"/>
    </location>
</feature>
<feature type="modified residue" description="N6-(2-hydroxyisobutyryl)lysine; alternate" evidence="1">
    <location>
        <position position="10"/>
    </location>
</feature>
<feature type="modified residue" description="N6-(beta-hydroxybutyryl)lysine; alternate" evidence="3">
    <location>
        <position position="10"/>
    </location>
</feature>
<feature type="modified residue" description="N6-acetyllysine; alternate" evidence="1">
    <location>
        <position position="10"/>
    </location>
</feature>
<feature type="modified residue" description="N6-lactoyllysine; alternate" evidence="1">
    <location>
        <position position="10"/>
    </location>
</feature>
<feature type="modified residue" description="N6-methyllysine; alternate" evidence="2">
    <location>
        <position position="10"/>
    </location>
</feature>
<feature type="modified residue" description="ADP-ribosylserine; alternate" evidence="1">
    <location>
        <position position="11"/>
    </location>
</feature>
<feature type="modified residue" description="Phosphoserine; alternate; by AURKB, AURKC, RPS6KA3, RPS6KA4 and RPS6KA5" evidence="2">
    <location>
        <position position="11"/>
    </location>
</feature>
<feature type="modified residue" description="Phosphothreonine; by PKC" evidence="1">
    <location>
        <position position="12"/>
    </location>
</feature>
<feature type="modified residue" description="N6-(2-hydroxyisobutyryl)lysine; alternate" evidence="1">
    <location>
        <position position="15"/>
    </location>
</feature>
<feature type="modified residue" description="N6-(beta-hydroxybutyryl)lysine; alternate" evidence="3">
    <location>
        <position position="15"/>
    </location>
</feature>
<feature type="modified residue" description="N6-acetyllysine; alternate" evidence="2">
    <location>
        <position position="15"/>
    </location>
</feature>
<feature type="modified residue" description="N6-glutaryllysine; alternate" evidence="4">
    <location>
        <position position="15"/>
    </location>
</feature>
<feature type="modified residue" description="N6-lactoyllysine; alternate" evidence="3">
    <location>
        <position position="15"/>
    </location>
</feature>
<feature type="modified residue" description="N6-succinyllysine; alternate" evidence="1">
    <location>
        <position position="15"/>
    </location>
</feature>
<feature type="modified residue" description="Asymmetric dimethylarginine; by CARM1; alternate" evidence="1">
    <location>
        <position position="18"/>
    </location>
</feature>
<feature type="modified residue" description="Citrulline; alternate" evidence="4">
    <location>
        <position position="18"/>
    </location>
</feature>
<feature type="modified residue" description="N6-(2-hydroxyisobutyryl)lysine; alternate" evidence="1">
    <location>
        <position position="19"/>
    </location>
</feature>
<feature type="modified residue" description="N6-(beta-hydroxybutyryl)lysine; alternate" evidence="3">
    <location>
        <position position="19"/>
    </location>
</feature>
<feature type="modified residue" description="N6-acetyllysine; alternate" evidence="12">
    <location>
        <position position="19"/>
    </location>
</feature>
<feature type="modified residue" description="N6-butyryllysine; alternate" evidence="3">
    <location>
        <position position="19"/>
    </location>
</feature>
<feature type="modified residue" description="N6-glutaryllysine; alternate" evidence="4">
    <location>
        <position position="19"/>
    </location>
</feature>
<feature type="modified residue" description="N6-lactoyllysine; alternate" evidence="1">
    <location>
        <position position="19"/>
    </location>
</feature>
<feature type="modified residue" description="N6-methyllysine; alternate" evidence="1">
    <location>
        <position position="19"/>
    </location>
</feature>
<feature type="modified residue" description="N6-(2-hydroxyisobutyryl)lysine; alternate" evidence="1">
    <location>
        <position position="24"/>
    </location>
</feature>
<feature type="modified residue" description="N6-(beta-hydroxybutyryl)lysine; alternate" evidence="3">
    <location>
        <position position="24"/>
    </location>
</feature>
<feature type="modified residue" description="N6-acetyllysine; alternate" evidence="12">
    <location>
        <position position="24"/>
    </location>
</feature>
<feature type="modified residue" description="N6-butyryllysine; alternate" evidence="3">
    <location>
        <position position="24"/>
    </location>
</feature>
<feature type="modified residue" description="N6-glutaryllysine; alternate" evidence="4">
    <location>
        <position position="24"/>
    </location>
</feature>
<feature type="modified residue" description="N6-lactoyllysine; alternate" evidence="1">
    <location>
        <position position="24"/>
    </location>
</feature>
<feature type="modified residue" description="N6-methyllysine; alternate" evidence="1">
    <location>
        <position position="24"/>
    </location>
</feature>
<feature type="modified residue" description="Citrulline" evidence="4">
    <location>
        <position position="27"/>
    </location>
</feature>
<feature type="modified residue" description="N6,N6,N6-trimethyllysine; alternate" evidence="2">
    <location>
        <position position="28"/>
    </location>
</feature>
<feature type="modified residue" description="N6,N6-dimethyllysine; alternate" evidence="2">
    <location>
        <position position="28"/>
    </location>
</feature>
<feature type="modified residue" description="N6-(2-hydroxyisobutyryl)lysine; alternate" evidence="1">
    <location>
        <position position="28"/>
    </location>
</feature>
<feature type="modified residue" description="N6-acetyllysine; alternate" evidence="1">
    <location>
        <position position="28"/>
    </location>
</feature>
<feature type="modified residue" description="N6-glutaryllysine; alternate" evidence="4">
    <location>
        <position position="28"/>
    </location>
</feature>
<feature type="modified residue" description="N6-lactoyllysine; alternate" evidence="1">
    <location>
        <position position="28"/>
    </location>
</feature>
<feature type="modified residue" description="N6-methyllysine; alternate" evidence="2">
    <location>
        <position position="28"/>
    </location>
</feature>
<feature type="modified residue" description="ADP-ribosylserine; alternate" evidence="1">
    <location>
        <position position="29"/>
    </location>
</feature>
<feature type="modified residue" description="Phosphoserine; alternate; by AURKB, AURKC and RPS6KA5" evidence="11">
    <location>
        <position position="29"/>
    </location>
</feature>
<feature type="modified residue" description="N6,N6,N6-trimethyllysine; alternate" evidence="1">
    <location>
        <position position="37"/>
    </location>
</feature>
<feature type="modified residue" description="N6,N6-dimethyllysine; alternate" evidence="1">
    <location>
        <position position="37"/>
    </location>
</feature>
<feature type="modified residue" description="N6-(2-hydroxyisobutyryl)lysine; alternate" evidence="1">
    <location>
        <position position="37"/>
    </location>
</feature>
<feature type="modified residue" description="N6-acetyllysine; alternate" evidence="1">
    <location>
        <position position="37"/>
    </location>
</feature>
<feature type="modified residue" description="N6-methyllysine; alternate" evidence="1">
    <location>
        <position position="37"/>
    </location>
</feature>
<feature type="modified residue" description="N6-methyllysine" evidence="1">
    <location>
        <position position="38"/>
    </location>
</feature>
<feature type="modified residue" description="Phosphotyrosine" evidence="1">
    <location>
        <position position="42"/>
    </location>
</feature>
<feature type="modified residue" description="N6,N6,N6-trimethyllysine; alternate" evidence="1">
    <location>
        <position position="57"/>
    </location>
</feature>
<feature type="modified residue" description="N6-(2-hydroxyisobutyryl)lysine; alternate" evidence="1">
    <location>
        <position position="57"/>
    </location>
</feature>
<feature type="modified residue" description="N6-(beta-hydroxybutyryl)lysine; alternate" evidence="3">
    <location>
        <position position="57"/>
    </location>
</feature>
<feature type="modified residue" description="N6-acetyllysine; alternate" evidence="1">
    <location>
        <position position="57"/>
    </location>
</feature>
<feature type="modified residue" description="N6-glutaryllysine; alternate" evidence="4">
    <location>
        <position position="57"/>
    </location>
</feature>
<feature type="modified residue" description="N6-lactoyllysine; alternate" evidence="3">
    <location>
        <position position="57"/>
    </location>
</feature>
<feature type="modified residue" description="N6-methyllysine; by EHMT2; alternate" evidence="1">
    <location>
        <position position="57"/>
    </location>
</feature>
<feature type="modified residue" description="N6-succinyllysine; alternate" evidence="1">
    <location>
        <position position="57"/>
    </location>
</feature>
<feature type="modified residue" description="Phosphoserine" evidence="7">
    <location>
        <position position="58"/>
    </location>
</feature>
<feature type="modified residue" description="N6-(2-hydroxyisobutyryl)lysine; alternate" evidence="1">
    <location>
        <position position="65"/>
    </location>
</feature>
<feature type="modified residue" description="N6-methyllysine; alternate" evidence="1">
    <location>
        <position position="65"/>
    </location>
</feature>
<feature type="modified residue" description="N6,N6,N6-trimethyllysine; alternate" evidence="3">
    <location>
        <position position="80"/>
    </location>
</feature>
<feature type="modified residue" description="N6,N6-dimethyllysine; alternate" evidence="1">
    <location>
        <position position="80"/>
    </location>
</feature>
<feature type="modified residue" description="N6-(2-hydroxyisobutyryl)lysine; alternate" evidence="1">
    <location>
        <position position="80"/>
    </location>
</feature>
<feature type="modified residue" description="N6-acetyllysine; alternate" evidence="1">
    <location>
        <position position="80"/>
    </location>
</feature>
<feature type="modified residue" description="N6-glutaryllysine; alternate" evidence="4">
    <location>
        <position position="80"/>
    </location>
</feature>
<feature type="modified residue" description="N6-lactoyllysine; alternate" evidence="1">
    <location>
        <position position="80"/>
    </location>
</feature>
<feature type="modified residue" description="N6-methyllysine; alternate" evidence="1">
    <location>
        <position position="80"/>
    </location>
</feature>
<feature type="modified residue" description="N6-succinyllysine; alternate" evidence="1">
    <location>
        <position position="80"/>
    </location>
</feature>
<feature type="modified residue" description="Phosphothreonine" evidence="7">
    <location>
        <position position="81"/>
    </location>
</feature>
<feature type="modified residue" description="Phosphoserine" evidence="4">
    <location>
        <position position="87"/>
    </location>
</feature>
<feature type="modified residue" description="Phosphothreonine" evidence="5">
    <location>
        <position position="108"/>
    </location>
</feature>
<feature type="modified residue" description="N6-acetyllysine; alternate" evidence="1">
    <location>
        <position position="116"/>
    </location>
</feature>
<feature type="modified residue" description="N6-glutaryllysine; alternate" evidence="4">
    <location>
        <position position="116"/>
    </location>
</feature>
<feature type="modified residue" description="N6-(2-hydroxyisobutyryl)lysine; alternate" evidence="1">
    <location>
        <position position="123"/>
    </location>
</feature>
<feature type="modified residue" description="N6-acetyllysine; alternate" evidence="1">
    <location>
        <position position="123"/>
    </location>
</feature>
<feature type="modified residue" description="N6-glutaryllysine; alternate" evidence="4">
    <location>
        <position position="123"/>
    </location>
</feature>
<feature type="modified residue" description="N6-methyllysine; alternate" evidence="1">
    <location>
        <position position="123"/>
    </location>
</feature>
<feature type="modified residue" description="N6-succinyllysine; alternate" evidence="1">
    <location>
        <position position="123"/>
    </location>
</feature>
<feature type="helix" evidence="14">
    <location>
        <begin position="5"/>
        <end position="12"/>
    </location>
</feature>
<feature type="helix" evidence="13">
    <location>
        <begin position="46"/>
        <end position="57"/>
    </location>
</feature>
<feature type="helix" evidence="13">
    <location>
        <begin position="65"/>
        <end position="76"/>
    </location>
</feature>
<feature type="turn" evidence="13">
    <location>
        <begin position="77"/>
        <end position="79"/>
    </location>
</feature>
<feature type="strand" evidence="13">
    <location>
        <begin position="80"/>
        <end position="82"/>
    </location>
</feature>
<feature type="helix" evidence="13">
    <location>
        <begin position="87"/>
        <end position="114"/>
    </location>
</feature>
<feature type="strand" evidence="13">
    <location>
        <begin position="118"/>
        <end position="120"/>
    </location>
</feature>
<feature type="helix" evidence="13">
    <location>
        <begin position="122"/>
        <end position="131"/>
    </location>
</feature>
<name>H31T_HUMAN</name>
<keyword id="KW-0002">3D-structure</keyword>
<keyword id="KW-0007">Acetylation</keyword>
<keyword id="KW-0013">ADP-ribosylation</keyword>
<keyword id="KW-0158">Chromosome</keyword>
<keyword id="KW-0164">Citrullination</keyword>
<keyword id="KW-0238">DNA-binding</keyword>
<keyword id="KW-0379">Hydroxylation</keyword>
<keyword id="KW-0488">Methylation</keyword>
<keyword id="KW-0544">Nucleosome core</keyword>
<keyword id="KW-0539">Nucleus</keyword>
<keyword id="KW-0597">Phosphoprotein</keyword>
<keyword id="KW-1267">Proteomics identification</keyword>
<keyword id="KW-1185">Reference proteome</keyword>
<keyword id="KW-0832">Ubl conjugation</keyword>
<gene>
    <name evidence="10" type="primary">H3-4</name>
    <name type="synonym">H3FT</name>
    <name evidence="10" type="synonym">HIST3H3</name>
</gene>
<reference key="1">
    <citation type="journal article" date="1996" name="Hum. Genet.">
        <title>A solitary human H3 histone gene on chromosome 1.</title>
        <authorList>
            <person name="Albig W."/>
            <person name="Ebentheuer J."/>
            <person name="Klobeck H."/>
            <person name="Kunz J."/>
            <person name="Doenecke D."/>
        </authorList>
    </citation>
    <scope>NUCLEOTIDE SEQUENCE [GENOMIC DNA]</scope>
</reference>
<reference key="2">
    <citation type="journal article" date="2002" name="Genomics">
        <title>The human and mouse replication-dependent histone genes.</title>
        <authorList>
            <person name="Marzluff W.F."/>
            <person name="Gongidi P."/>
            <person name="Woods K.R."/>
            <person name="Jin J."/>
            <person name="Maltais L.J."/>
        </authorList>
    </citation>
    <scope>NUCLEOTIDE SEQUENCE [GENOMIC DNA]</scope>
</reference>
<reference key="3">
    <citation type="submission" date="2004-06" db="EMBL/GenBank/DDBJ databases">
        <title>Cloning of human full open reading frames in Gateway(TM) system entry vector (pDONR201).</title>
        <authorList>
            <person name="Ebert L."/>
            <person name="Schick M."/>
            <person name="Neubert P."/>
            <person name="Schatten R."/>
            <person name="Henze S."/>
            <person name="Korn B."/>
        </authorList>
    </citation>
    <scope>NUCLEOTIDE SEQUENCE [LARGE SCALE MRNA]</scope>
</reference>
<reference key="4">
    <citation type="journal article" date="2004" name="Nat. Genet.">
        <title>Complete sequencing and characterization of 21,243 full-length human cDNAs.</title>
        <authorList>
            <person name="Ota T."/>
            <person name="Suzuki Y."/>
            <person name="Nishikawa T."/>
            <person name="Otsuki T."/>
            <person name="Sugiyama T."/>
            <person name="Irie R."/>
            <person name="Wakamatsu A."/>
            <person name="Hayashi K."/>
            <person name="Sato H."/>
            <person name="Nagai K."/>
            <person name="Kimura K."/>
            <person name="Makita H."/>
            <person name="Sekine M."/>
            <person name="Obayashi M."/>
            <person name="Nishi T."/>
            <person name="Shibahara T."/>
            <person name="Tanaka T."/>
            <person name="Ishii S."/>
            <person name="Yamamoto J."/>
            <person name="Saito K."/>
            <person name="Kawai Y."/>
            <person name="Isono Y."/>
            <person name="Nakamura Y."/>
            <person name="Nagahari K."/>
            <person name="Murakami K."/>
            <person name="Yasuda T."/>
            <person name="Iwayanagi T."/>
            <person name="Wagatsuma M."/>
            <person name="Shiratori A."/>
            <person name="Sudo H."/>
            <person name="Hosoiri T."/>
            <person name="Kaku Y."/>
            <person name="Kodaira H."/>
            <person name="Kondo H."/>
            <person name="Sugawara M."/>
            <person name="Takahashi M."/>
            <person name="Kanda K."/>
            <person name="Yokoi T."/>
            <person name="Furuya T."/>
            <person name="Kikkawa E."/>
            <person name="Omura Y."/>
            <person name="Abe K."/>
            <person name="Kamihara K."/>
            <person name="Katsuta N."/>
            <person name="Sato K."/>
            <person name="Tanikawa M."/>
            <person name="Yamazaki M."/>
            <person name="Ninomiya K."/>
            <person name="Ishibashi T."/>
            <person name="Yamashita H."/>
            <person name="Murakawa K."/>
            <person name="Fujimori K."/>
            <person name="Tanai H."/>
            <person name="Kimata M."/>
            <person name="Watanabe M."/>
            <person name="Hiraoka S."/>
            <person name="Chiba Y."/>
            <person name="Ishida S."/>
            <person name="Ono Y."/>
            <person name="Takiguchi S."/>
            <person name="Watanabe S."/>
            <person name="Yosida M."/>
            <person name="Hotuta T."/>
            <person name="Kusano J."/>
            <person name="Kanehori K."/>
            <person name="Takahashi-Fujii A."/>
            <person name="Hara H."/>
            <person name="Tanase T.-O."/>
            <person name="Nomura Y."/>
            <person name="Togiya S."/>
            <person name="Komai F."/>
            <person name="Hara R."/>
            <person name="Takeuchi K."/>
            <person name="Arita M."/>
            <person name="Imose N."/>
            <person name="Musashino K."/>
            <person name="Yuuki H."/>
            <person name="Oshima A."/>
            <person name="Sasaki N."/>
            <person name="Aotsuka S."/>
            <person name="Yoshikawa Y."/>
            <person name="Matsunawa H."/>
            <person name="Ichihara T."/>
            <person name="Shiohata N."/>
            <person name="Sano S."/>
            <person name="Moriya S."/>
            <person name="Momiyama H."/>
            <person name="Satoh N."/>
            <person name="Takami S."/>
            <person name="Terashima Y."/>
            <person name="Suzuki O."/>
            <person name="Nakagawa S."/>
            <person name="Senoh A."/>
            <person name="Mizoguchi H."/>
            <person name="Goto Y."/>
            <person name="Shimizu F."/>
            <person name="Wakebe H."/>
            <person name="Hishigaki H."/>
            <person name="Watanabe T."/>
            <person name="Sugiyama A."/>
            <person name="Takemoto M."/>
            <person name="Kawakami B."/>
            <person name="Yamazaki M."/>
            <person name="Watanabe K."/>
            <person name="Kumagai A."/>
            <person name="Itakura S."/>
            <person name="Fukuzumi Y."/>
            <person name="Fujimori Y."/>
            <person name="Komiyama M."/>
            <person name="Tashiro H."/>
            <person name="Tanigami A."/>
            <person name="Fujiwara T."/>
            <person name="Ono T."/>
            <person name="Yamada K."/>
            <person name="Fujii Y."/>
            <person name="Ozaki K."/>
            <person name="Hirao M."/>
            <person name="Ohmori Y."/>
            <person name="Kawabata A."/>
            <person name="Hikiji T."/>
            <person name="Kobatake N."/>
            <person name="Inagaki H."/>
            <person name="Ikema Y."/>
            <person name="Okamoto S."/>
            <person name="Okitani R."/>
            <person name="Kawakami T."/>
            <person name="Noguchi S."/>
            <person name="Itoh T."/>
            <person name="Shigeta K."/>
            <person name="Senba T."/>
            <person name="Matsumura K."/>
            <person name="Nakajima Y."/>
            <person name="Mizuno T."/>
            <person name="Morinaga M."/>
            <person name="Sasaki M."/>
            <person name="Togashi T."/>
            <person name="Oyama M."/>
            <person name="Hata H."/>
            <person name="Watanabe M."/>
            <person name="Komatsu T."/>
            <person name="Mizushima-Sugano J."/>
            <person name="Satoh T."/>
            <person name="Shirai Y."/>
            <person name="Takahashi Y."/>
            <person name="Nakagawa K."/>
            <person name="Okumura K."/>
            <person name="Nagase T."/>
            <person name="Nomura N."/>
            <person name="Kikuchi H."/>
            <person name="Masuho Y."/>
            <person name="Yamashita R."/>
            <person name="Nakai K."/>
            <person name="Yada T."/>
            <person name="Nakamura Y."/>
            <person name="Ohara O."/>
            <person name="Isogai T."/>
            <person name="Sugano S."/>
        </authorList>
    </citation>
    <scope>NUCLEOTIDE SEQUENCE [LARGE SCALE MRNA]</scope>
    <source>
        <tissue>Testis</tissue>
    </source>
</reference>
<reference key="5">
    <citation type="journal article" date="2006" name="Nature">
        <title>The DNA sequence and biological annotation of human chromosome 1.</title>
        <authorList>
            <person name="Gregory S.G."/>
            <person name="Barlow K.F."/>
            <person name="McLay K.E."/>
            <person name="Kaul R."/>
            <person name="Swarbreck D."/>
            <person name="Dunham A."/>
            <person name="Scott C.E."/>
            <person name="Howe K.L."/>
            <person name="Woodfine K."/>
            <person name="Spencer C.C.A."/>
            <person name="Jones M.C."/>
            <person name="Gillson C."/>
            <person name="Searle S."/>
            <person name="Zhou Y."/>
            <person name="Kokocinski F."/>
            <person name="McDonald L."/>
            <person name="Evans R."/>
            <person name="Phillips K."/>
            <person name="Atkinson A."/>
            <person name="Cooper R."/>
            <person name="Jones C."/>
            <person name="Hall R.E."/>
            <person name="Andrews T.D."/>
            <person name="Lloyd C."/>
            <person name="Ainscough R."/>
            <person name="Almeida J.P."/>
            <person name="Ambrose K.D."/>
            <person name="Anderson F."/>
            <person name="Andrew R.W."/>
            <person name="Ashwell R.I.S."/>
            <person name="Aubin K."/>
            <person name="Babbage A.K."/>
            <person name="Bagguley C.L."/>
            <person name="Bailey J."/>
            <person name="Beasley H."/>
            <person name="Bethel G."/>
            <person name="Bird C.P."/>
            <person name="Bray-Allen S."/>
            <person name="Brown J.Y."/>
            <person name="Brown A.J."/>
            <person name="Buckley D."/>
            <person name="Burton J."/>
            <person name="Bye J."/>
            <person name="Carder C."/>
            <person name="Chapman J.C."/>
            <person name="Clark S.Y."/>
            <person name="Clarke G."/>
            <person name="Clee C."/>
            <person name="Cobley V."/>
            <person name="Collier R.E."/>
            <person name="Corby N."/>
            <person name="Coville G.J."/>
            <person name="Davies J."/>
            <person name="Deadman R."/>
            <person name="Dunn M."/>
            <person name="Earthrowl M."/>
            <person name="Ellington A.G."/>
            <person name="Errington H."/>
            <person name="Frankish A."/>
            <person name="Frankland J."/>
            <person name="French L."/>
            <person name="Garner P."/>
            <person name="Garnett J."/>
            <person name="Gay L."/>
            <person name="Ghori M.R.J."/>
            <person name="Gibson R."/>
            <person name="Gilby L.M."/>
            <person name="Gillett W."/>
            <person name="Glithero R.J."/>
            <person name="Grafham D.V."/>
            <person name="Griffiths C."/>
            <person name="Griffiths-Jones S."/>
            <person name="Grocock R."/>
            <person name="Hammond S."/>
            <person name="Harrison E.S.I."/>
            <person name="Hart E."/>
            <person name="Haugen E."/>
            <person name="Heath P.D."/>
            <person name="Holmes S."/>
            <person name="Holt K."/>
            <person name="Howden P.J."/>
            <person name="Hunt A.R."/>
            <person name="Hunt S.E."/>
            <person name="Hunter G."/>
            <person name="Isherwood J."/>
            <person name="James R."/>
            <person name="Johnson C."/>
            <person name="Johnson D."/>
            <person name="Joy A."/>
            <person name="Kay M."/>
            <person name="Kershaw J.K."/>
            <person name="Kibukawa M."/>
            <person name="Kimberley A.M."/>
            <person name="King A."/>
            <person name="Knights A.J."/>
            <person name="Lad H."/>
            <person name="Laird G."/>
            <person name="Lawlor S."/>
            <person name="Leongamornlert D.A."/>
            <person name="Lloyd D.M."/>
            <person name="Loveland J."/>
            <person name="Lovell J."/>
            <person name="Lush M.J."/>
            <person name="Lyne R."/>
            <person name="Martin S."/>
            <person name="Mashreghi-Mohammadi M."/>
            <person name="Matthews L."/>
            <person name="Matthews N.S.W."/>
            <person name="McLaren S."/>
            <person name="Milne S."/>
            <person name="Mistry S."/>
            <person name="Moore M.J.F."/>
            <person name="Nickerson T."/>
            <person name="O'Dell C.N."/>
            <person name="Oliver K."/>
            <person name="Palmeiri A."/>
            <person name="Palmer S.A."/>
            <person name="Parker A."/>
            <person name="Patel D."/>
            <person name="Pearce A.V."/>
            <person name="Peck A.I."/>
            <person name="Pelan S."/>
            <person name="Phelps K."/>
            <person name="Phillimore B.J."/>
            <person name="Plumb R."/>
            <person name="Rajan J."/>
            <person name="Raymond C."/>
            <person name="Rouse G."/>
            <person name="Saenphimmachak C."/>
            <person name="Sehra H.K."/>
            <person name="Sheridan E."/>
            <person name="Shownkeen R."/>
            <person name="Sims S."/>
            <person name="Skuce C.D."/>
            <person name="Smith M."/>
            <person name="Steward C."/>
            <person name="Subramanian S."/>
            <person name="Sycamore N."/>
            <person name="Tracey A."/>
            <person name="Tromans A."/>
            <person name="Van Helmond Z."/>
            <person name="Wall M."/>
            <person name="Wallis J.M."/>
            <person name="White S."/>
            <person name="Whitehead S.L."/>
            <person name="Wilkinson J.E."/>
            <person name="Willey D.L."/>
            <person name="Williams H."/>
            <person name="Wilming L."/>
            <person name="Wray P.W."/>
            <person name="Wu Z."/>
            <person name="Coulson A."/>
            <person name="Vaudin M."/>
            <person name="Sulston J.E."/>
            <person name="Durbin R.M."/>
            <person name="Hubbard T."/>
            <person name="Wooster R."/>
            <person name="Dunham I."/>
            <person name="Carter N.P."/>
            <person name="McVean G."/>
            <person name="Ross M.T."/>
            <person name="Harrow J."/>
            <person name="Olson M.V."/>
            <person name="Beck S."/>
            <person name="Rogers J."/>
            <person name="Bentley D.R."/>
        </authorList>
    </citation>
    <scope>NUCLEOTIDE SEQUENCE [LARGE SCALE GENOMIC DNA]</scope>
</reference>
<reference key="6">
    <citation type="submission" date="2005-07" db="EMBL/GenBank/DDBJ databases">
        <authorList>
            <person name="Mural R.J."/>
            <person name="Istrail S."/>
            <person name="Sutton G.G."/>
            <person name="Florea L."/>
            <person name="Halpern A.L."/>
            <person name="Mobarry C.M."/>
            <person name="Lippert R."/>
            <person name="Walenz B."/>
            <person name="Shatkay H."/>
            <person name="Dew I."/>
            <person name="Miller J.R."/>
            <person name="Flanigan M.J."/>
            <person name="Edwards N.J."/>
            <person name="Bolanos R."/>
            <person name="Fasulo D."/>
            <person name="Halldorsson B.V."/>
            <person name="Hannenhalli S."/>
            <person name="Turner R."/>
            <person name="Yooseph S."/>
            <person name="Lu F."/>
            <person name="Nusskern D.R."/>
            <person name="Shue B.C."/>
            <person name="Zheng X.H."/>
            <person name="Zhong F."/>
            <person name="Delcher A.L."/>
            <person name="Huson D.H."/>
            <person name="Kravitz S.A."/>
            <person name="Mouchard L."/>
            <person name="Reinert K."/>
            <person name="Remington K.A."/>
            <person name="Clark A.G."/>
            <person name="Waterman M.S."/>
            <person name="Eichler E.E."/>
            <person name="Adams M.D."/>
            <person name="Hunkapiller M.W."/>
            <person name="Myers E.W."/>
            <person name="Venter J.C."/>
        </authorList>
    </citation>
    <scope>NUCLEOTIDE SEQUENCE [LARGE SCALE GENOMIC DNA]</scope>
</reference>
<reference key="7">
    <citation type="journal article" date="2004" name="Genome Res.">
        <title>The status, quality, and expansion of the NIH full-length cDNA project: the Mammalian Gene Collection (MGC).</title>
        <authorList>
            <consortium name="The MGC Project Team"/>
        </authorList>
    </citation>
    <scope>NUCLEOTIDE SEQUENCE [LARGE SCALE MRNA]</scope>
    <source>
        <tissue>Lung</tissue>
        <tissue>Placenta</tissue>
    </source>
</reference>
<reference key="8">
    <citation type="journal article" date="2008" name="Mol. Cell">
        <title>Kinase-selective enrichment enables quantitative phosphoproteomics of the kinome across the cell cycle.</title>
        <authorList>
            <person name="Daub H."/>
            <person name="Olsen J.V."/>
            <person name="Bairlein M."/>
            <person name="Gnad F."/>
            <person name="Oppermann F.S."/>
            <person name="Korner R."/>
            <person name="Greff Z."/>
            <person name="Keri G."/>
            <person name="Stemmann O."/>
            <person name="Mann M."/>
        </authorList>
    </citation>
    <scope>PHOSPHORYLATION [LARGE SCALE ANALYSIS] AT SER-29</scope>
    <scope>IDENTIFICATION BY MASS SPECTROMETRY [LARGE SCALE ANALYSIS]</scope>
    <source>
        <tissue>Cervix carcinoma</tissue>
    </source>
</reference>
<reference key="9">
    <citation type="journal article" date="2009" name="Science">
        <title>Lysine acetylation targets protein complexes and co-regulates major cellular functions.</title>
        <authorList>
            <person name="Choudhary C."/>
            <person name="Kumar C."/>
            <person name="Gnad F."/>
            <person name="Nielsen M.L."/>
            <person name="Rehman M."/>
            <person name="Walther T.C."/>
            <person name="Olsen J.V."/>
            <person name="Mann M."/>
        </authorList>
    </citation>
    <scope>ACETYLATION [LARGE SCALE ANALYSIS] AT LYS-19 AND LYS-24</scope>
    <scope>IDENTIFICATION BY MASS SPECTROMETRY [LARGE SCALE ANALYSIS]</scope>
</reference>
<reference key="10">
    <citation type="journal article" date="2010" name="Cell">
        <title>Quantitative interaction proteomics and genome-wide profiling of epigenetic histone marks and their readers.</title>
        <authorList>
            <person name="Vermeulen M."/>
            <person name="Eberl H.C."/>
            <person name="Matarese F."/>
            <person name="Marks H."/>
            <person name="Denissov S."/>
            <person name="Butter F."/>
            <person name="Lee K.K."/>
            <person name="Olsen J.V."/>
            <person name="Hyman A.A."/>
            <person name="Stunnenberg H.G."/>
            <person name="Mann M."/>
        </authorList>
    </citation>
    <scope>PHOSPHORYLATION AT SER-58 AND THR-81</scope>
</reference>
<reference key="11">
    <citation type="journal article" date="2021" name="Mol. Cell">
        <title>DNAJC9 integrates heat shock molecular chaperones into the histone chaperone network.</title>
        <authorList>
            <person name="Hammond C.M."/>
            <person name="Bao H."/>
            <person name="Hendriks I.A."/>
            <person name="Carraro M."/>
            <person name="Garcia-Nieto A."/>
            <person name="Liu Y."/>
            <person name="Reveron-Gomez N."/>
            <person name="Spanos C."/>
            <person name="Chen L."/>
            <person name="Rappsilber J."/>
            <person name="Nielsen M.L."/>
            <person name="Patel D.J."/>
            <person name="Huang H."/>
            <person name="Groth A."/>
        </authorList>
    </citation>
    <scope>INTERACTION WITH TONSL; CHAF1A AND CHAF1B</scope>
</reference>
<proteinExistence type="evidence at protein level"/>
<accession>Q16695</accession>
<accession>B2R5K3</accession>
<accession>Q6FGU4</accession>
<evidence type="ECO:0000250" key="1">
    <source>
        <dbReference type="UniProtKB" id="P68431"/>
    </source>
</evidence>
<evidence type="ECO:0000250" key="2">
    <source>
        <dbReference type="UniProtKB" id="P68432"/>
    </source>
</evidence>
<evidence type="ECO:0000250" key="3">
    <source>
        <dbReference type="UniProtKB" id="P68433"/>
    </source>
</evidence>
<evidence type="ECO:0000250" key="4">
    <source>
        <dbReference type="UniProtKB" id="P84243"/>
    </source>
</evidence>
<evidence type="ECO:0000250" key="5">
    <source>
        <dbReference type="UniProtKB" id="Q71DI3"/>
    </source>
</evidence>
<evidence type="ECO:0000256" key="6">
    <source>
        <dbReference type="SAM" id="MobiDB-lite"/>
    </source>
</evidence>
<evidence type="ECO:0000269" key="7">
    <source>
    </source>
</evidence>
<evidence type="ECO:0000269" key="8">
    <source>
    </source>
</evidence>
<evidence type="ECO:0000305" key="9"/>
<evidence type="ECO:0000312" key="10">
    <source>
        <dbReference type="HGNC" id="HGNC:4778"/>
    </source>
</evidence>
<evidence type="ECO:0007744" key="11">
    <source>
    </source>
</evidence>
<evidence type="ECO:0007744" key="12">
    <source>
    </source>
</evidence>
<evidence type="ECO:0007829" key="13">
    <source>
        <dbReference type="PDB" id="3A6N"/>
    </source>
</evidence>
<evidence type="ECO:0007829" key="14">
    <source>
        <dbReference type="PDB" id="6OIE"/>
    </source>
</evidence>
<protein>
    <recommendedName>
        <fullName>Histone H3.1t</fullName>
        <shortName>H3/t</shortName>
        <shortName>H3t</shortName>
    </recommendedName>
    <alternativeName>
        <fullName>H3/g</fullName>
    </alternativeName>
    <alternativeName>
        <fullName evidence="10">Histone H3.4</fullName>
    </alternativeName>
</protein>
<sequence length="136" mass="15508">MARTKQTARKSTGGKAPRKQLATKVARKSAPATGGVKKPHRYRPGTVALREIRRYQKSTELLIRKLPFQRLMREIAQDFKTDLRFQSSAVMALQEACESYLVGLFEDTNLCVIHAKRVTIMPKDIQLARRIRGERA</sequence>
<dbReference type="EMBL" id="Z49861">
    <property type="protein sequence ID" value="CAA90020.1"/>
    <property type="molecule type" value="Genomic_DNA"/>
</dbReference>
<dbReference type="EMBL" id="AF531308">
    <property type="protein sequence ID" value="AAN39284.1"/>
    <property type="molecule type" value="Genomic_DNA"/>
</dbReference>
<dbReference type="EMBL" id="CR542013">
    <property type="protein sequence ID" value="CAG46810.1"/>
    <property type="molecule type" value="mRNA"/>
</dbReference>
<dbReference type="EMBL" id="AK312217">
    <property type="protein sequence ID" value="BAG35150.1"/>
    <property type="molecule type" value="mRNA"/>
</dbReference>
<dbReference type="EMBL" id="AL139288">
    <property type="status" value="NOT_ANNOTATED_CDS"/>
    <property type="molecule type" value="Genomic_DNA"/>
</dbReference>
<dbReference type="EMBL" id="CH471098">
    <property type="protein sequence ID" value="EAW69877.1"/>
    <property type="molecule type" value="Genomic_DNA"/>
</dbReference>
<dbReference type="EMBL" id="BC069079">
    <property type="protein sequence ID" value="AAH69079.1"/>
    <property type="molecule type" value="mRNA"/>
</dbReference>
<dbReference type="EMBL" id="BC101837">
    <property type="protein sequence ID" value="AAI01838.1"/>
    <property type="molecule type" value="mRNA"/>
</dbReference>
<dbReference type="EMBL" id="BC101839">
    <property type="protein sequence ID" value="AAI01840.1"/>
    <property type="molecule type" value="mRNA"/>
</dbReference>
<dbReference type="CCDS" id="CCDS1572.1"/>
<dbReference type="PIR" id="S57473">
    <property type="entry name" value="S57473"/>
</dbReference>
<dbReference type="RefSeq" id="NP_003484.1">
    <property type="nucleotide sequence ID" value="NM_003493.3"/>
</dbReference>
<dbReference type="PDB" id="2V1D">
    <property type="method" value="X-ray"/>
    <property type="resolution" value="3.10 A"/>
    <property type="chains" value="C=2-22"/>
</dbReference>
<dbReference type="PDB" id="2YBP">
    <property type="method" value="X-ray"/>
    <property type="resolution" value="2.02 A"/>
    <property type="chains" value="C/D=31-42"/>
</dbReference>
<dbReference type="PDB" id="2YBS">
    <property type="method" value="X-ray"/>
    <property type="resolution" value="2.32 A"/>
    <property type="chains" value="C/D=31-42"/>
</dbReference>
<dbReference type="PDB" id="3A6N">
    <property type="method" value="X-ray"/>
    <property type="resolution" value="2.70 A"/>
    <property type="chains" value="A/E=1-136"/>
</dbReference>
<dbReference type="PDB" id="3T6R">
    <property type="method" value="X-ray"/>
    <property type="resolution" value="1.95 A"/>
    <property type="chains" value="D=2-8"/>
</dbReference>
<dbReference type="PDB" id="4V2V">
    <property type="method" value="X-ray"/>
    <property type="resolution" value="2.00 A"/>
    <property type="chains" value="C/D=26-30"/>
</dbReference>
<dbReference type="PDB" id="4V2W">
    <property type="method" value="X-ray"/>
    <property type="resolution" value="1.81 A"/>
    <property type="chains" value="C=17-36"/>
</dbReference>
<dbReference type="PDB" id="6OIE">
    <property type="method" value="X-ray"/>
    <property type="resolution" value="2.08 A"/>
    <property type="chains" value="C/D=2-20"/>
</dbReference>
<dbReference type="PDB" id="6WAT">
    <property type="method" value="X-ray"/>
    <property type="resolution" value="1.80 A"/>
    <property type="chains" value="A/B/C/D/E/F/G/H/I/J/K/L/M/N/O/P/Q/R/S/T/V/Y/Z/a/b/c/d/e/f/g=22-30"/>
</dbReference>
<dbReference type="PDB" id="6WAU">
    <property type="method" value="X-ray"/>
    <property type="resolution" value="1.75 A"/>
    <property type="chains" value="G/H/I/J/K/L=22-33"/>
</dbReference>
<dbReference type="PDB" id="8VMI">
    <property type="method" value="EM"/>
    <property type="resolution" value="3.10 A"/>
    <property type="chains" value="I=26-43"/>
</dbReference>
<dbReference type="PDB" id="8Z50">
    <property type="method" value="X-ray"/>
    <property type="resolution" value="2.80 A"/>
    <property type="chains" value="B=1-136"/>
</dbReference>
<dbReference type="PDBsum" id="2V1D"/>
<dbReference type="PDBsum" id="2YBP"/>
<dbReference type="PDBsum" id="2YBS"/>
<dbReference type="PDBsum" id="3A6N"/>
<dbReference type="PDBsum" id="3T6R"/>
<dbReference type="PDBsum" id="4V2V"/>
<dbReference type="PDBsum" id="4V2W"/>
<dbReference type="PDBsum" id="6OIE"/>
<dbReference type="PDBsum" id="6WAT"/>
<dbReference type="PDBsum" id="6WAU"/>
<dbReference type="PDBsum" id="8VMI"/>
<dbReference type="PDBsum" id="8Z50"/>
<dbReference type="EMDB" id="EMD-43357"/>
<dbReference type="SMR" id="Q16695"/>
<dbReference type="BioGRID" id="113895">
    <property type="interactions" value="434"/>
</dbReference>
<dbReference type="ComplexPortal" id="CPX-2564">
    <property type="entry name" value="Nucleosome, variant H3.1t-H2A.2-H2B.1"/>
</dbReference>
<dbReference type="DIP" id="DIP-922N"/>
<dbReference type="FunCoup" id="Q16695">
    <property type="interactions" value="656"/>
</dbReference>
<dbReference type="IntAct" id="Q16695">
    <property type="interactions" value="168"/>
</dbReference>
<dbReference type="MINT" id="Q16695"/>
<dbReference type="STRING" id="9606.ENSP00000355657"/>
<dbReference type="GlyGen" id="Q16695">
    <property type="glycosylation" value="1 site, 1 O-linked glycan (1 site)"/>
</dbReference>
<dbReference type="iPTMnet" id="Q16695"/>
<dbReference type="MetOSite" id="Q16695"/>
<dbReference type="PhosphoSitePlus" id="Q16695"/>
<dbReference type="SwissPalm" id="Q16695"/>
<dbReference type="BioMuta" id="HIST3H3"/>
<dbReference type="DMDM" id="18202512"/>
<dbReference type="jPOST" id="Q16695"/>
<dbReference type="MassIVE" id="Q16695"/>
<dbReference type="PaxDb" id="9606-ENSP00000355657"/>
<dbReference type="PeptideAtlas" id="Q16695"/>
<dbReference type="ProteomicsDB" id="61035"/>
<dbReference type="Pumba" id="Q16695"/>
<dbReference type="TopDownProteomics" id="Q16695"/>
<dbReference type="Antibodypedia" id="34666">
    <property type="antibodies" value="1914 antibodies from 33 providers"/>
</dbReference>
<dbReference type="DNASU" id="8290"/>
<dbReference type="Ensembl" id="ENST00000366696.2">
    <property type="protein sequence ID" value="ENSP00000355657.2"/>
    <property type="gene ID" value="ENSG00000168148.4"/>
</dbReference>
<dbReference type="Ensembl" id="ENST00000644869.3">
    <property type="protein sequence ID" value="ENSP00000494070.1"/>
    <property type="gene ID" value="ENSG00000285435.3"/>
</dbReference>
<dbReference type="GeneID" id="8290"/>
<dbReference type="KEGG" id="hsa:8290"/>
<dbReference type="MANE-Select" id="ENST00000366696.2">
    <property type="protein sequence ID" value="ENSP00000355657.2"/>
    <property type="RefSeq nucleotide sequence ID" value="NM_003493.3"/>
    <property type="RefSeq protein sequence ID" value="NP_003484.1"/>
</dbReference>
<dbReference type="UCSC" id="uc001hsx.1">
    <property type="organism name" value="human"/>
</dbReference>
<dbReference type="AGR" id="HGNC:4778"/>
<dbReference type="CTD" id="8290"/>
<dbReference type="DisGeNET" id="8290"/>
<dbReference type="GeneCards" id="H3-4"/>
<dbReference type="HGNC" id="HGNC:4778">
    <property type="gene designation" value="H3-4"/>
</dbReference>
<dbReference type="HPA" id="ENSG00000168148">
    <property type="expression patterns" value="Tissue enriched (testis)"/>
</dbReference>
<dbReference type="MalaCards" id="H3-4"/>
<dbReference type="MIM" id="602820">
    <property type="type" value="gene"/>
</dbReference>
<dbReference type="neXtProt" id="NX_Q16695"/>
<dbReference type="OpenTargets" id="ENSG00000168148"/>
<dbReference type="VEuPathDB" id="HostDB:ENSG00000168148"/>
<dbReference type="eggNOG" id="KOG1745">
    <property type="taxonomic scope" value="Eukaryota"/>
</dbReference>
<dbReference type="GeneTree" id="ENSGT01130000278271"/>
<dbReference type="HOGENOM" id="CLU_078295_4_0_1"/>
<dbReference type="InParanoid" id="Q16695"/>
<dbReference type="OMA" id="MLNSEYT"/>
<dbReference type="OrthoDB" id="9992679at2759"/>
<dbReference type="PAN-GO" id="Q16695">
    <property type="GO annotations" value="0 GO annotations based on evolutionary models"/>
</dbReference>
<dbReference type="PhylomeDB" id="Q16695"/>
<dbReference type="TreeFam" id="TF314241"/>
<dbReference type="PathwayCommons" id="Q16695"/>
<dbReference type="Reactome" id="R-HSA-110328">
    <property type="pathway name" value="Recognition and association of DNA glycosylase with site containing an affected pyrimidine"/>
</dbReference>
<dbReference type="Reactome" id="R-HSA-110329">
    <property type="pathway name" value="Cleavage of the damaged pyrimidine"/>
</dbReference>
<dbReference type="Reactome" id="R-HSA-110330">
    <property type="pathway name" value="Recognition and association of DNA glycosylase with site containing an affected purine"/>
</dbReference>
<dbReference type="Reactome" id="R-HSA-110331">
    <property type="pathway name" value="Cleavage of the damaged purine"/>
</dbReference>
<dbReference type="Reactome" id="R-HSA-1221632">
    <property type="pathway name" value="Meiotic synapsis"/>
</dbReference>
<dbReference type="Reactome" id="R-HSA-171306">
    <property type="pathway name" value="Packaging Of Telomere Ends"/>
</dbReference>
<dbReference type="Reactome" id="R-HSA-201722">
    <property type="pathway name" value="Formation of the beta-catenin:TCF transactivating complex"/>
</dbReference>
<dbReference type="Reactome" id="R-HSA-2299718">
    <property type="pathway name" value="Condensation of Prophase Chromosomes"/>
</dbReference>
<dbReference type="Reactome" id="R-HSA-2559586">
    <property type="pathway name" value="DNA Damage/Telomere Stress Induced Senescence"/>
</dbReference>
<dbReference type="Reactome" id="R-HSA-5693565">
    <property type="pathway name" value="Recruitment and ATM-mediated phosphorylation of repair and signaling proteins at DNA double strand breaks"/>
</dbReference>
<dbReference type="Reactome" id="R-HSA-5693571">
    <property type="pathway name" value="Nonhomologous End-Joining (NHEJ)"/>
</dbReference>
<dbReference type="Reactome" id="R-HSA-5693607">
    <property type="pathway name" value="Processing of DNA double-strand break ends"/>
</dbReference>
<dbReference type="Reactome" id="R-HSA-69473">
    <property type="pathway name" value="G2/M DNA damage checkpoint"/>
</dbReference>
<dbReference type="Reactome" id="R-HSA-912446">
    <property type="pathway name" value="Meiotic recombination"/>
</dbReference>
<dbReference type="Reactome" id="R-HSA-9670095">
    <property type="pathway name" value="Inhibition of DNA recombination at telomere"/>
</dbReference>
<dbReference type="SignaLink" id="Q16695"/>
<dbReference type="SIGNOR" id="Q16695"/>
<dbReference type="BioGRID-ORCS" id="8290">
    <property type="hits" value="268 hits in 1135 CRISPR screens"/>
</dbReference>
<dbReference type="CD-CODE" id="91857CE7">
    <property type="entry name" value="Nucleolus"/>
</dbReference>
<dbReference type="EvolutionaryTrace" id="Q16695"/>
<dbReference type="GeneWiki" id="HIST3H3"/>
<dbReference type="GenomeRNAi" id="8290"/>
<dbReference type="Pharos" id="Q16695">
    <property type="development level" value="Tbio"/>
</dbReference>
<dbReference type="PRO" id="PR:Q16695"/>
<dbReference type="Proteomes" id="UP000005640">
    <property type="component" value="Chromosome 1"/>
</dbReference>
<dbReference type="RNAct" id="Q16695">
    <property type="molecule type" value="protein"/>
</dbReference>
<dbReference type="Bgee" id="ENSG00000168148">
    <property type="expression patterns" value="Expressed in male germ line stem cell (sensu Vertebrata) in testis and 65 other cell types or tissues"/>
</dbReference>
<dbReference type="GO" id="GO:0000781">
    <property type="term" value="C:chromosome, telomeric region"/>
    <property type="evidence" value="ECO:0007005"/>
    <property type="project" value="BHF-UCL"/>
</dbReference>
<dbReference type="GO" id="GO:0000794">
    <property type="term" value="C:condensed nuclear chromosome"/>
    <property type="evidence" value="ECO:0007669"/>
    <property type="project" value="Ensembl"/>
</dbReference>
<dbReference type="GO" id="GO:0070062">
    <property type="term" value="C:extracellular exosome"/>
    <property type="evidence" value="ECO:0007005"/>
    <property type="project" value="UniProtKB"/>
</dbReference>
<dbReference type="GO" id="GO:0000792">
    <property type="term" value="C:heterochromatin"/>
    <property type="evidence" value="ECO:0007669"/>
    <property type="project" value="Ensembl"/>
</dbReference>
<dbReference type="GO" id="GO:0005654">
    <property type="term" value="C:nucleoplasm"/>
    <property type="evidence" value="ECO:0000314"/>
    <property type="project" value="HPA"/>
</dbReference>
<dbReference type="GO" id="GO:0000786">
    <property type="term" value="C:nucleosome"/>
    <property type="evidence" value="ECO:0000314"/>
    <property type="project" value="UniProtKB"/>
</dbReference>
<dbReference type="GO" id="GO:0005634">
    <property type="term" value="C:nucleus"/>
    <property type="evidence" value="ECO:0007005"/>
    <property type="project" value="UniProtKB"/>
</dbReference>
<dbReference type="GO" id="GO:0003677">
    <property type="term" value="F:DNA binding"/>
    <property type="evidence" value="ECO:0007669"/>
    <property type="project" value="UniProtKB-KW"/>
</dbReference>
<dbReference type="GO" id="GO:0046982">
    <property type="term" value="F:protein heterodimerization activity"/>
    <property type="evidence" value="ECO:0007669"/>
    <property type="project" value="InterPro"/>
</dbReference>
<dbReference type="GO" id="GO:0030527">
    <property type="term" value="F:structural constituent of chromatin"/>
    <property type="evidence" value="ECO:0007669"/>
    <property type="project" value="Ensembl"/>
</dbReference>
<dbReference type="GO" id="GO:0006325">
    <property type="term" value="P:chromatin organization"/>
    <property type="evidence" value="ECO:0000303"/>
    <property type="project" value="ComplexPortal"/>
</dbReference>
<dbReference type="GO" id="GO:0006335">
    <property type="term" value="P:DNA replication-dependent chromatin assembly"/>
    <property type="evidence" value="ECO:0007669"/>
    <property type="project" value="Ensembl"/>
</dbReference>
<dbReference type="GO" id="GO:0006334">
    <property type="term" value="P:nucleosome assembly"/>
    <property type="evidence" value="ECO:0000314"/>
    <property type="project" value="UniProtKB"/>
</dbReference>
<dbReference type="GO" id="GO:0045595">
    <property type="term" value="P:regulation of cell differentiation"/>
    <property type="evidence" value="ECO:0007669"/>
    <property type="project" value="Ensembl"/>
</dbReference>
<dbReference type="GO" id="GO:0007284">
    <property type="term" value="P:spermatogonial cell division"/>
    <property type="evidence" value="ECO:0007669"/>
    <property type="project" value="Ensembl"/>
</dbReference>
<dbReference type="CDD" id="cd22911">
    <property type="entry name" value="HFD_H3"/>
    <property type="match status" value="1"/>
</dbReference>
<dbReference type="FunFam" id="1.10.20.10:FF:000078">
    <property type="entry name" value="Histone H3"/>
    <property type="match status" value="1"/>
</dbReference>
<dbReference type="FunFam" id="1.10.20.10:FF:000044">
    <property type="entry name" value="Histone H3.3"/>
    <property type="match status" value="1"/>
</dbReference>
<dbReference type="Gene3D" id="1.10.20.10">
    <property type="entry name" value="Histone, subunit A"/>
    <property type="match status" value="1"/>
</dbReference>
<dbReference type="IDEAL" id="IID00086"/>
<dbReference type="InterPro" id="IPR009072">
    <property type="entry name" value="Histone-fold"/>
</dbReference>
<dbReference type="InterPro" id="IPR007125">
    <property type="entry name" value="Histone_H2A/H2B/H3"/>
</dbReference>
<dbReference type="InterPro" id="IPR000164">
    <property type="entry name" value="Histone_H3/CENP-A"/>
</dbReference>
<dbReference type="PANTHER" id="PTHR11426">
    <property type="entry name" value="HISTONE H3"/>
    <property type="match status" value="1"/>
</dbReference>
<dbReference type="Pfam" id="PF00125">
    <property type="entry name" value="Histone"/>
    <property type="match status" value="1"/>
</dbReference>
<dbReference type="PRINTS" id="PR00622">
    <property type="entry name" value="HISTONEH3"/>
</dbReference>
<dbReference type="SMART" id="SM00428">
    <property type="entry name" value="H3"/>
    <property type="match status" value="1"/>
</dbReference>
<dbReference type="SUPFAM" id="SSF47113">
    <property type="entry name" value="Histone-fold"/>
    <property type="match status" value="1"/>
</dbReference>
<dbReference type="PROSITE" id="PS00322">
    <property type="entry name" value="HISTONE_H3_1"/>
    <property type="match status" value="1"/>
</dbReference>